<evidence type="ECO:0000250" key="1">
    <source>
        <dbReference type="UniProtKB" id="Q94125"/>
    </source>
</evidence>
<evidence type="ECO:0000255" key="2">
    <source>
        <dbReference type="PROSITE-ProRule" id="PRU00269"/>
    </source>
</evidence>
<evidence type="ECO:0000255" key="3">
    <source>
        <dbReference type="PROSITE-ProRule" id="PRU00877"/>
    </source>
</evidence>
<evidence type="ECO:0000255" key="4">
    <source>
        <dbReference type="PROSITE-ProRule" id="PRU00878"/>
    </source>
</evidence>
<evidence type="ECO:0000255" key="5">
    <source>
        <dbReference type="PROSITE-ProRule" id="PRU00879"/>
    </source>
</evidence>
<evidence type="ECO:0000255" key="6">
    <source>
        <dbReference type="PROSITE-ProRule" id="PRU00880"/>
    </source>
</evidence>
<evidence type="ECO:0000256" key="7">
    <source>
        <dbReference type="SAM" id="MobiDB-lite"/>
    </source>
</evidence>
<accession>P0C5E7</accession>
<accession>A8WTC1</accession>
<accession>Q620C1</accession>
<sequence length="1159" mass="133936">MSMGRSSSTTFRNRTASHGSRSLGSAETARIPRKLSSQLSHTHANILHPQLQTMMEQWQMRERPSLETENGKGSLLLSSEGVADMIVLSSFGEVISVVFPWFLANVRTSFDIKLSEFKHQLFEQIGPMKWGKHSTQPQDYAFRQLNNFGEIEVIFNDDQQLSCLELHGTFPMLFLFEPDGFNRDKELMCDISHCLGYSLDKLEESIDEELRQFRASLWTQTKKTCFERGVDGVDHYAFPEEQYFCVGEKCPTDLESKVKAAKLDYQLFWTKRKSEANEVWEKMYKITIDFDPEFNPQSLMRMFVKELQCMNLFDPEDPPDEEWILQLAGRTSFVTRPEISLVSYDGIRSELESYRCPGFVVRRKSLVLKDYVRPKPLYEPHYVRVHERKMALDVLSVSIGTEVKHSGNSDKVWTDFRPTASLEQITLWDLDSNLMIRPVNVTGLPFTASHDIYLGMEFKVYVGTLTLATIKIPRVPTTKLVWKREFFTFDLYMKDMPPSAILSVRVYSMKTTKMKEEIELGWVNISLSDWRDELRQGQIKLNLWGPEPSANRSRIGHNGAKIGTSLSVTVEISSHGRRVKMPNEAQYKYLVDHRISWSDTVEIVGDDYEACIGDPGYKKLQDLVKKHESGVILDDSEQRHVWSWRNYIQKQEPDLLVVLSELRIVWTDRENFSELYVMLETWKAPSVAAALTLLGKRCTDRVIRKFAVNKLNDQLSQFNVHLFLLPLIQALKYEPRAYSEVGMMLLTRALSSYRIGHRLFWLLRSEICRLKDCATNNEEYRRISLLMEAYLRGNEEHIKGIIRQVDMVDELTRISSLVKGLSKEAAREKLRDQLRTISHKMESIDSPLDPVYKFGEMVIEKAIVLGSAKQPLRLVWKNKNPKSDLHLPFCEVIFKNGDDLRQDMLVLQVLEVMDTIWKAANIDCCLSPYGVLPMGEMIGIIEVVPNCKTIFEIQHKAGLVNTAARSVDSNFMNKWIRKQCGFVDEKKKYKKGGGPTVDSAQATKKYFESVDRFLYSCVGYSVATYIMGIKDRHSDNLMLTEDGKYFHIDFGHILGHGKTKLGIQRDRQPFILTEQFLTIIRSGKPVDGNSHEIQKFKTLCLEAYEVMWNNLKYKFQKTLCCKGETKEKARKFFAGVYEEAFNGSWSTKTNWLFHAMKHY</sequence>
<reference key="1">
    <citation type="journal article" date="2003" name="PLoS Biol.">
        <title>The genome sequence of Caenorhabditis briggsae: a platform for comparative genomics.</title>
        <authorList>
            <person name="Stein L.D."/>
            <person name="Bao Z."/>
            <person name="Blasiar D."/>
            <person name="Blumenthal T."/>
            <person name="Brent M.R."/>
            <person name="Chen N."/>
            <person name="Chinwalla A."/>
            <person name="Clarke L."/>
            <person name="Clee C."/>
            <person name="Coghlan A."/>
            <person name="Coulson A."/>
            <person name="D'Eustachio P."/>
            <person name="Fitch D.H.A."/>
            <person name="Fulton L.A."/>
            <person name="Fulton R.E."/>
            <person name="Griffiths-Jones S."/>
            <person name="Harris T.W."/>
            <person name="Hillier L.W."/>
            <person name="Kamath R."/>
            <person name="Kuwabara P.E."/>
            <person name="Mardis E.R."/>
            <person name="Marra M.A."/>
            <person name="Miner T.L."/>
            <person name="Minx P."/>
            <person name="Mullikin J.C."/>
            <person name="Plumb R.W."/>
            <person name="Rogers J."/>
            <person name="Schein J.E."/>
            <person name="Sohrmann M."/>
            <person name="Spieth J."/>
            <person name="Stajich J.E."/>
            <person name="Wei C."/>
            <person name="Willey D."/>
            <person name="Wilson R.K."/>
            <person name="Durbin R.M."/>
            <person name="Waterston R.H."/>
        </authorList>
    </citation>
    <scope>NUCLEOTIDE SEQUENCE [LARGE SCALE GENOMIC DNA]</scope>
    <source>
        <strain>AF16</strain>
    </source>
</reference>
<keyword id="KW-0067">ATP-binding</keyword>
<keyword id="KW-0418">Kinase</keyword>
<keyword id="KW-0547">Nucleotide-binding</keyword>
<keyword id="KW-1185">Reference proteome</keyword>
<keyword id="KW-0808">Transferase</keyword>
<dbReference type="EC" id="2.7.1.137"/>
<dbReference type="EMBL" id="HE601438">
    <property type="protein sequence ID" value="CAP23732.2"/>
    <property type="molecule type" value="Genomic_DNA"/>
</dbReference>
<dbReference type="SMR" id="P0C5E7"/>
<dbReference type="FunCoup" id="P0C5E7">
    <property type="interactions" value="2266"/>
</dbReference>
<dbReference type="STRING" id="6238.P0C5E7"/>
<dbReference type="WormBase" id="CBG02868">
    <property type="protein sequence ID" value="CBP43879"/>
    <property type="gene ID" value="WBGene00025837"/>
    <property type="gene designation" value="Cbr-age-1"/>
</dbReference>
<dbReference type="eggNOG" id="KOG0904">
    <property type="taxonomic scope" value="Eukaryota"/>
</dbReference>
<dbReference type="HOGENOM" id="CLU_002191_1_3_1"/>
<dbReference type="InParanoid" id="P0C5E7"/>
<dbReference type="OMA" id="WDCDRRF"/>
<dbReference type="Proteomes" id="UP000008549">
    <property type="component" value="Unassembled WGS sequence"/>
</dbReference>
<dbReference type="GO" id="GO:0005737">
    <property type="term" value="C:cytoplasm"/>
    <property type="evidence" value="ECO:0000318"/>
    <property type="project" value="GO_Central"/>
</dbReference>
<dbReference type="GO" id="GO:0005942">
    <property type="term" value="C:phosphatidylinositol 3-kinase complex"/>
    <property type="evidence" value="ECO:0000318"/>
    <property type="project" value="GO_Central"/>
</dbReference>
<dbReference type="GO" id="GO:0005886">
    <property type="term" value="C:plasma membrane"/>
    <property type="evidence" value="ECO:0000318"/>
    <property type="project" value="GO_Central"/>
</dbReference>
<dbReference type="GO" id="GO:0016303">
    <property type="term" value="F:1-phosphatidylinositol-3-kinase activity"/>
    <property type="evidence" value="ECO:0000318"/>
    <property type="project" value="GO_Central"/>
</dbReference>
<dbReference type="GO" id="GO:0035005">
    <property type="term" value="F:1-phosphatidylinositol-4-phosphate 3-kinase activity"/>
    <property type="evidence" value="ECO:0000318"/>
    <property type="project" value="GO_Central"/>
</dbReference>
<dbReference type="GO" id="GO:0005524">
    <property type="term" value="F:ATP binding"/>
    <property type="evidence" value="ECO:0007669"/>
    <property type="project" value="UniProtKB-KW"/>
</dbReference>
<dbReference type="GO" id="GO:0016477">
    <property type="term" value="P:cell migration"/>
    <property type="evidence" value="ECO:0000318"/>
    <property type="project" value="GO_Central"/>
</dbReference>
<dbReference type="GO" id="GO:0040024">
    <property type="term" value="P:dauer larval development"/>
    <property type="evidence" value="ECO:0000250"/>
    <property type="project" value="UniProtKB"/>
</dbReference>
<dbReference type="GO" id="GO:0043491">
    <property type="term" value="P:phosphatidylinositol 3-kinase/protein kinase B signal transduction"/>
    <property type="evidence" value="ECO:0000318"/>
    <property type="project" value="GO_Central"/>
</dbReference>
<dbReference type="GO" id="GO:0036092">
    <property type="term" value="P:phosphatidylinositol-3-phosphate biosynthetic process"/>
    <property type="evidence" value="ECO:0000318"/>
    <property type="project" value="GO_Central"/>
</dbReference>
<dbReference type="GO" id="GO:0048015">
    <property type="term" value="P:phosphatidylinositol-mediated signaling"/>
    <property type="evidence" value="ECO:0000318"/>
    <property type="project" value="GO_Central"/>
</dbReference>
<dbReference type="CDD" id="cd08380">
    <property type="entry name" value="C2_PI3K_like"/>
    <property type="match status" value="1"/>
</dbReference>
<dbReference type="CDD" id="cd00864">
    <property type="entry name" value="PI3Ka"/>
    <property type="match status" value="1"/>
</dbReference>
<dbReference type="FunFam" id="1.25.40.70:FF:000024">
    <property type="entry name" value="Phosphatidylinositol 3-kinase age-1"/>
    <property type="match status" value="1"/>
</dbReference>
<dbReference type="FunFam" id="2.60.40.150:FF:000314">
    <property type="entry name" value="Phosphatidylinositol 3-kinase age-1"/>
    <property type="match status" value="1"/>
</dbReference>
<dbReference type="FunFam" id="3.10.20.770:FF:000007">
    <property type="entry name" value="Phosphatidylinositol 3-kinase age-1"/>
    <property type="match status" value="1"/>
</dbReference>
<dbReference type="FunFam" id="3.30.1010.10:FF:000001">
    <property type="entry name" value="Phosphatidylinositol 4-phosphate 3-kinase C2 domain-containing subunit beta"/>
    <property type="match status" value="1"/>
</dbReference>
<dbReference type="Gene3D" id="3.10.20.770">
    <property type="match status" value="1"/>
</dbReference>
<dbReference type="Gene3D" id="2.60.40.150">
    <property type="entry name" value="C2 domain"/>
    <property type="match status" value="1"/>
</dbReference>
<dbReference type="Gene3D" id="1.10.1070.11">
    <property type="entry name" value="Phosphatidylinositol 3-/4-kinase, catalytic domain"/>
    <property type="match status" value="1"/>
</dbReference>
<dbReference type="Gene3D" id="3.30.1010.10">
    <property type="entry name" value="Phosphatidylinositol 3-kinase Catalytic Subunit, Chain A, domain 4"/>
    <property type="match status" value="1"/>
</dbReference>
<dbReference type="Gene3D" id="1.25.40.70">
    <property type="entry name" value="Phosphatidylinositol 3-kinase, accessory domain (PIK)"/>
    <property type="match status" value="1"/>
</dbReference>
<dbReference type="InterPro" id="IPR016024">
    <property type="entry name" value="ARM-type_fold"/>
</dbReference>
<dbReference type="InterPro" id="IPR035892">
    <property type="entry name" value="C2_domain_sf"/>
</dbReference>
<dbReference type="InterPro" id="IPR011009">
    <property type="entry name" value="Kinase-like_dom_sf"/>
</dbReference>
<dbReference type="InterPro" id="IPR000403">
    <property type="entry name" value="PI3/4_kinase_cat_dom"/>
</dbReference>
<dbReference type="InterPro" id="IPR036940">
    <property type="entry name" value="PI3/4_kinase_cat_sf"/>
</dbReference>
<dbReference type="InterPro" id="IPR018936">
    <property type="entry name" value="PI3/4_kinase_CS"/>
</dbReference>
<dbReference type="InterPro" id="IPR002420">
    <property type="entry name" value="PI3K-type_C2_dom"/>
</dbReference>
<dbReference type="InterPro" id="IPR003113">
    <property type="entry name" value="PI3K_ABD"/>
</dbReference>
<dbReference type="InterPro" id="IPR001263">
    <property type="entry name" value="PI3K_accessory_dom"/>
</dbReference>
<dbReference type="InterPro" id="IPR042236">
    <property type="entry name" value="PI3K_accessory_sf"/>
</dbReference>
<dbReference type="InterPro" id="IPR000341">
    <property type="entry name" value="PI3K_Ras-bd_dom"/>
</dbReference>
<dbReference type="InterPro" id="IPR015433">
    <property type="entry name" value="PI_Kinase"/>
</dbReference>
<dbReference type="InterPro" id="IPR029071">
    <property type="entry name" value="Ubiquitin-like_domsf"/>
</dbReference>
<dbReference type="PANTHER" id="PTHR10048:SF111">
    <property type="entry name" value="PHOSPHATIDYLINOSITOL 3-KINASE AGE-1"/>
    <property type="match status" value="1"/>
</dbReference>
<dbReference type="PANTHER" id="PTHR10048">
    <property type="entry name" value="PHOSPHATIDYLINOSITOL KINASE"/>
    <property type="match status" value="1"/>
</dbReference>
<dbReference type="Pfam" id="PF00454">
    <property type="entry name" value="PI3_PI4_kinase"/>
    <property type="match status" value="1"/>
</dbReference>
<dbReference type="Pfam" id="PF00792">
    <property type="entry name" value="PI3K_C2"/>
    <property type="match status" value="1"/>
</dbReference>
<dbReference type="Pfam" id="PF02192">
    <property type="entry name" value="PI3K_p85B"/>
    <property type="match status" value="1"/>
</dbReference>
<dbReference type="Pfam" id="PF00794">
    <property type="entry name" value="PI3K_rbd"/>
    <property type="match status" value="1"/>
</dbReference>
<dbReference type="Pfam" id="PF00613">
    <property type="entry name" value="PI3Ka"/>
    <property type="match status" value="1"/>
</dbReference>
<dbReference type="SMART" id="SM00142">
    <property type="entry name" value="PI3K_C2"/>
    <property type="match status" value="1"/>
</dbReference>
<dbReference type="SMART" id="SM00143">
    <property type="entry name" value="PI3K_p85B"/>
    <property type="match status" value="1"/>
</dbReference>
<dbReference type="SMART" id="SM00144">
    <property type="entry name" value="PI3K_rbd"/>
    <property type="match status" value="1"/>
</dbReference>
<dbReference type="SMART" id="SM00145">
    <property type="entry name" value="PI3Ka"/>
    <property type="match status" value="1"/>
</dbReference>
<dbReference type="SMART" id="SM00146">
    <property type="entry name" value="PI3Kc"/>
    <property type="match status" value="1"/>
</dbReference>
<dbReference type="SUPFAM" id="SSF48371">
    <property type="entry name" value="ARM repeat"/>
    <property type="match status" value="1"/>
</dbReference>
<dbReference type="SUPFAM" id="SSF49562">
    <property type="entry name" value="C2 domain (Calcium/lipid-binding domain, CaLB)"/>
    <property type="match status" value="1"/>
</dbReference>
<dbReference type="SUPFAM" id="SSF56112">
    <property type="entry name" value="Protein kinase-like (PK-like)"/>
    <property type="match status" value="1"/>
</dbReference>
<dbReference type="SUPFAM" id="SSF54236">
    <property type="entry name" value="Ubiquitin-like"/>
    <property type="match status" value="1"/>
</dbReference>
<dbReference type="PROSITE" id="PS51547">
    <property type="entry name" value="C2_PI3K"/>
    <property type="match status" value="1"/>
</dbReference>
<dbReference type="PROSITE" id="PS00915">
    <property type="entry name" value="PI3_4_KINASE_1"/>
    <property type="match status" value="1"/>
</dbReference>
<dbReference type="PROSITE" id="PS00916">
    <property type="entry name" value="PI3_4_KINASE_2"/>
    <property type="match status" value="1"/>
</dbReference>
<dbReference type="PROSITE" id="PS50290">
    <property type="entry name" value="PI3_4_KINASE_3"/>
    <property type="match status" value="1"/>
</dbReference>
<dbReference type="PROSITE" id="PS51544">
    <property type="entry name" value="PI3K_ABD"/>
    <property type="match status" value="1"/>
</dbReference>
<dbReference type="PROSITE" id="PS51546">
    <property type="entry name" value="PI3K_RBD"/>
    <property type="match status" value="1"/>
</dbReference>
<dbReference type="PROSITE" id="PS51545">
    <property type="entry name" value="PIK_HELICAL"/>
    <property type="match status" value="1"/>
</dbReference>
<feature type="chain" id="PRO_0000304611" description="Phosphatidylinositol 3-kinase age-1">
    <location>
        <begin position="1"/>
        <end position="1159"/>
    </location>
</feature>
<feature type="domain" description="PI3K-ABD" evidence="3">
    <location>
        <begin position="79"/>
        <end position="179"/>
    </location>
</feature>
<feature type="domain" description="PI3K-RBD" evidence="5">
    <location>
        <begin position="272"/>
        <end position="363"/>
    </location>
</feature>
<feature type="domain" description="C2 PI3K-type" evidence="6">
    <location>
        <begin position="430"/>
        <end position="588"/>
    </location>
</feature>
<feature type="domain" description="PIK helical" evidence="4">
    <location>
        <begin position="607"/>
        <end position="793"/>
    </location>
</feature>
<feature type="domain" description="PI3K/PI4K catalytic" evidence="2">
    <location>
        <begin position="858"/>
        <end position="1159"/>
    </location>
</feature>
<feature type="region of interest" description="Disordered" evidence="7">
    <location>
        <begin position="1"/>
        <end position="28"/>
    </location>
</feature>
<feature type="region of interest" description="G-loop" evidence="2">
    <location>
        <begin position="864"/>
        <end position="870"/>
    </location>
</feature>
<feature type="region of interest" description="Catalytic loop" evidence="2">
    <location>
        <begin position="1028"/>
        <end position="1036"/>
    </location>
</feature>
<feature type="region of interest" description="Activation loop" evidence="2">
    <location>
        <begin position="1047"/>
        <end position="1073"/>
    </location>
</feature>
<feature type="compositionally biased region" description="Polar residues" evidence="7">
    <location>
        <begin position="1"/>
        <end position="25"/>
    </location>
</feature>
<protein>
    <recommendedName>
        <fullName>Phosphatidylinositol 3-kinase age-1</fullName>
        <shortName>PI3-kinase age-1</shortName>
        <shortName>PI3K age-1</shortName>
        <shortName>PtdIns-3-kinase age-1</shortName>
        <ecNumber>2.7.1.137</ecNumber>
    </recommendedName>
    <alternativeName>
        <fullName>Aging alteration protein 1</fullName>
    </alternativeName>
</protein>
<comment type="function">
    <text evidence="1">Phosphatidylinositol 3-kinase homolog that regulates longevity and diapause. Promotes cell survival during embryonic development by recruiting akt-1/2 to the plasma membrane through the production of PtdIns(3,4,5)P3. Could function in the development or neuroendocrine signaling of the dauer pathway. Mediates susceptibility to enteropathogenic E.coli infection. May negatively regulate AYI interneuron neurite outgrowth. Plays a role in aversive olfactory learning when an odor is associated with food deprivation. Regulates this process by promoting the nuclear relocalization of egl-4 in AWC olfactory neurons after odor conditioning.</text>
</comment>
<comment type="catalytic activity">
    <reaction>
        <text>a 1,2-diacyl-sn-glycero-3-phospho-(1D-myo-inositol) + ATP = a 1,2-diacyl-sn-glycero-3-phospho-(1D-myo-inositol-3-phosphate) + ADP + H(+)</text>
        <dbReference type="Rhea" id="RHEA:12709"/>
        <dbReference type="ChEBI" id="CHEBI:15378"/>
        <dbReference type="ChEBI" id="CHEBI:30616"/>
        <dbReference type="ChEBI" id="CHEBI:57880"/>
        <dbReference type="ChEBI" id="CHEBI:58088"/>
        <dbReference type="ChEBI" id="CHEBI:456216"/>
        <dbReference type="EC" id="2.7.1.137"/>
    </reaction>
</comment>
<comment type="similarity">
    <text evidence="3 5 6">Belongs to the PI3/PI4-kinase family.</text>
</comment>
<name>AGE1_CAEBR</name>
<gene>
    <name type="primary">age-1</name>
    <name type="ORF">CBG02868</name>
</gene>
<proteinExistence type="inferred from homology"/>
<organism>
    <name type="scientific">Caenorhabditis briggsae</name>
    <dbReference type="NCBI Taxonomy" id="6238"/>
    <lineage>
        <taxon>Eukaryota</taxon>
        <taxon>Metazoa</taxon>
        <taxon>Ecdysozoa</taxon>
        <taxon>Nematoda</taxon>
        <taxon>Chromadorea</taxon>
        <taxon>Rhabditida</taxon>
        <taxon>Rhabditina</taxon>
        <taxon>Rhabditomorpha</taxon>
        <taxon>Rhabditoidea</taxon>
        <taxon>Rhabditidae</taxon>
        <taxon>Peloderinae</taxon>
        <taxon>Caenorhabditis</taxon>
    </lineage>
</organism>